<reference key="1">
    <citation type="journal article" date="1994" name="DNA Res.">
        <title>Prediction of the coding sequences of unidentified human genes. II. The coding sequences of 40 new genes (KIAA0041-KIAA0080) deduced by analysis of cDNA clones from human cell line KG-1.</title>
        <authorList>
            <person name="Nomura N."/>
            <person name="Nagase T."/>
            <person name="Miyajima N."/>
            <person name="Sazuka T."/>
            <person name="Tanaka A."/>
            <person name="Sato S."/>
            <person name="Seki N."/>
            <person name="Kawarabayasi Y."/>
            <person name="Ishikawa K."/>
            <person name="Tabata S."/>
        </authorList>
    </citation>
    <scope>NUCLEOTIDE SEQUENCE [LARGE SCALE MRNA] (ISOFORM 1)</scope>
    <scope>TISSUE SPECIFICITY</scope>
    <source>
        <tissue>Bone marrow</tissue>
    </source>
</reference>
<reference key="2">
    <citation type="journal article" date="2004" name="Nat. Genet.">
        <title>Complete sequencing and characterization of 21,243 full-length human cDNAs.</title>
        <authorList>
            <person name="Ota T."/>
            <person name="Suzuki Y."/>
            <person name="Nishikawa T."/>
            <person name="Otsuki T."/>
            <person name="Sugiyama T."/>
            <person name="Irie R."/>
            <person name="Wakamatsu A."/>
            <person name="Hayashi K."/>
            <person name="Sato H."/>
            <person name="Nagai K."/>
            <person name="Kimura K."/>
            <person name="Makita H."/>
            <person name="Sekine M."/>
            <person name="Obayashi M."/>
            <person name="Nishi T."/>
            <person name="Shibahara T."/>
            <person name="Tanaka T."/>
            <person name="Ishii S."/>
            <person name="Yamamoto J."/>
            <person name="Saito K."/>
            <person name="Kawai Y."/>
            <person name="Isono Y."/>
            <person name="Nakamura Y."/>
            <person name="Nagahari K."/>
            <person name="Murakami K."/>
            <person name="Yasuda T."/>
            <person name="Iwayanagi T."/>
            <person name="Wagatsuma M."/>
            <person name="Shiratori A."/>
            <person name="Sudo H."/>
            <person name="Hosoiri T."/>
            <person name="Kaku Y."/>
            <person name="Kodaira H."/>
            <person name="Kondo H."/>
            <person name="Sugawara M."/>
            <person name="Takahashi M."/>
            <person name="Kanda K."/>
            <person name="Yokoi T."/>
            <person name="Furuya T."/>
            <person name="Kikkawa E."/>
            <person name="Omura Y."/>
            <person name="Abe K."/>
            <person name="Kamihara K."/>
            <person name="Katsuta N."/>
            <person name="Sato K."/>
            <person name="Tanikawa M."/>
            <person name="Yamazaki M."/>
            <person name="Ninomiya K."/>
            <person name="Ishibashi T."/>
            <person name="Yamashita H."/>
            <person name="Murakawa K."/>
            <person name="Fujimori K."/>
            <person name="Tanai H."/>
            <person name="Kimata M."/>
            <person name="Watanabe M."/>
            <person name="Hiraoka S."/>
            <person name="Chiba Y."/>
            <person name="Ishida S."/>
            <person name="Ono Y."/>
            <person name="Takiguchi S."/>
            <person name="Watanabe S."/>
            <person name="Yosida M."/>
            <person name="Hotuta T."/>
            <person name="Kusano J."/>
            <person name="Kanehori K."/>
            <person name="Takahashi-Fujii A."/>
            <person name="Hara H."/>
            <person name="Tanase T.-O."/>
            <person name="Nomura Y."/>
            <person name="Togiya S."/>
            <person name="Komai F."/>
            <person name="Hara R."/>
            <person name="Takeuchi K."/>
            <person name="Arita M."/>
            <person name="Imose N."/>
            <person name="Musashino K."/>
            <person name="Yuuki H."/>
            <person name="Oshima A."/>
            <person name="Sasaki N."/>
            <person name="Aotsuka S."/>
            <person name="Yoshikawa Y."/>
            <person name="Matsunawa H."/>
            <person name="Ichihara T."/>
            <person name="Shiohata N."/>
            <person name="Sano S."/>
            <person name="Moriya S."/>
            <person name="Momiyama H."/>
            <person name="Satoh N."/>
            <person name="Takami S."/>
            <person name="Terashima Y."/>
            <person name="Suzuki O."/>
            <person name="Nakagawa S."/>
            <person name="Senoh A."/>
            <person name="Mizoguchi H."/>
            <person name="Goto Y."/>
            <person name="Shimizu F."/>
            <person name="Wakebe H."/>
            <person name="Hishigaki H."/>
            <person name="Watanabe T."/>
            <person name="Sugiyama A."/>
            <person name="Takemoto M."/>
            <person name="Kawakami B."/>
            <person name="Yamazaki M."/>
            <person name="Watanabe K."/>
            <person name="Kumagai A."/>
            <person name="Itakura S."/>
            <person name="Fukuzumi Y."/>
            <person name="Fujimori Y."/>
            <person name="Komiyama M."/>
            <person name="Tashiro H."/>
            <person name="Tanigami A."/>
            <person name="Fujiwara T."/>
            <person name="Ono T."/>
            <person name="Yamada K."/>
            <person name="Fujii Y."/>
            <person name="Ozaki K."/>
            <person name="Hirao M."/>
            <person name="Ohmori Y."/>
            <person name="Kawabata A."/>
            <person name="Hikiji T."/>
            <person name="Kobatake N."/>
            <person name="Inagaki H."/>
            <person name="Ikema Y."/>
            <person name="Okamoto S."/>
            <person name="Okitani R."/>
            <person name="Kawakami T."/>
            <person name="Noguchi S."/>
            <person name="Itoh T."/>
            <person name="Shigeta K."/>
            <person name="Senba T."/>
            <person name="Matsumura K."/>
            <person name="Nakajima Y."/>
            <person name="Mizuno T."/>
            <person name="Morinaga M."/>
            <person name="Sasaki M."/>
            <person name="Togashi T."/>
            <person name="Oyama M."/>
            <person name="Hata H."/>
            <person name="Watanabe M."/>
            <person name="Komatsu T."/>
            <person name="Mizushima-Sugano J."/>
            <person name="Satoh T."/>
            <person name="Shirai Y."/>
            <person name="Takahashi Y."/>
            <person name="Nakagawa K."/>
            <person name="Okumura K."/>
            <person name="Nagase T."/>
            <person name="Nomura N."/>
            <person name="Kikuchi H."/>
            <person name="Masuho Y."/>
            <person name="Yamashita R."/>
            <person name="Nakai K."/>
            <person name="Yada T."/>
            <person name="Nakamura Y."/>
            <person name="Ohara O."/>
            <person name="Isogai T."/>
            <person name="Sugano S."/>
        </authorList>
    </citation>
    <scope>NUCLEOTIDE SEQUENCE [LARGE SCALE MRNA] (ISOFORMS 1 AND 2)</scope>
    <source>
        <tissue>Hippocampus</tissue>
    </source>
</reference>
<reference key="3">
    <citation type="journal article" date="2006" name="Nature">
        <title>DNA sequence and analysis of human chromosome 8.</title>
        <authorList>
            <person name="Nusbaum C."/>
            <person name="Mikkelsen T.S."/>
            <person name="Zody M.C."/>
            <person name="Asakawa S."/>
            <person name="Taudien S."/>
            <person name="Garber M."/>
            <person name="Kodira C.D."/>
            <person name="Schueler M.G."/>
            <person name="Shimizu A."/>
            <person name="Whittaker C.A."/>
            <person name="Chang J.L."/>
            <person name="Cuomo C.A."/>
            <person name="Dewar K."/>
            <person name="FitzGerald M.G."/>
            <person name="Yang X."/>
            <person name="Allen N.R."/>
            <person name="Anderson S."/>
            <person name="Asakawa T."/>
            <person name="Blechschmidt K."/>
            <person name="Bloom T."/>
            <person name="Borowsky M.L."/>
            <person name="Butler J."/>
            <person name="Cook A."/>
            <person name="Corum B."/>
            <person name="DeArellano K."/>
            <person name="DeCaprio D."/>
            <person name="Dooley K.T."/>
            <person name="Dorris L. III"/>
            <person name="Engels R."/>
            <person name="Gloeckner G."/>
            <person name="Hafez N."/>
            <person name="Hagopian D.S."/>
            <person name="Hall J.L."/>
            <person name="Ishikawa S.K."/>
            <person name="Jaffe D.B."/>
            <person name="Kamat A."/>
            <person name="Kudoh J."/>
            <person name="Lehmann R."/>
            <person name="Lokitsang T."/>
            <person name="Macdonald P."/>
            <person name="Major J.E."/>
            <person name="Matthews C.D."/>
            <person name="Mauceli E."/>
            <person name="Menzel U."/>
            <person name="Mihalev A.H."/>
            <person name="Minoshima S."/>
            <person name="Murayama Y."/>
            <person name="Naylor J.W."/>
            <person name="Nicol R."/>
            <person name="Nguyen C."/>
            <person name="O'Leary S.B."/>
            <person name="O'Neill K."/>
            <person name="Parker S.C.J."/>
            <person name="Polley A."/>
            <person name="Raymond C.K."/>
            <person name="Reichwald K."/>
            <person name="Rodriguez J."/>
            <person name="Sasaki T."/>
            <person name="Schilhabel M."/>
            <person name="Siddiqui R."/>
            <person name="Smith C.L."/>
            <person name="Sneddon T.P."/>
            <person name="Talamas J.A."/>
            <person name="Tenzin P."/>
            <person name="Topham K."/>
            <person name="Venkataraman V."/>
            <person name="Wen G."/>
            <person name="Yamazaki S."/>
            <person name="Young S.K."/>
            <person name="Zeng Q."/>
            <person name="Zimmer A.R."/>
            <person name="Rosenthal A."/>
            <person name="Birren B.W."/>
            <person name="Platzer M."/>
            <person name="Shimizu N."/>
            <person name="Lander E.S."/>
        </authorList>
    </citation>
    <scope>NUCLEOTIDE SEQUENCE [LARGE SCALE GENOMIC DNA]</scope>
</reference>
<reference key="4">
    <citation type="submission" date="2005-09" db="EMBL/GenBank/DDBJ databases">
        <authorList>
            <person name="Mural R.J."/>
            <person name="Istrail S."/>
            <person name="Sutton G.G."/>
            <person name="Florea L."/>
            <person name="Halpern A.L."/>
            <person name="Mobarry C.M."/>
            <person name="Lippert R."/>
            <person name="Walenz B."/>
            <person name="Shatkay H."/>
            <person name="Dew I."/>
            <person name="Miller J.R."/>
            <person name="Flanigan M.J."/>
            <person name="Edwards N.J."/>
            <person name="Bolanos R."/>
            <person name="Fasulo D."/>
            <person name="Halldorsson B.V."/>
            <person name="Hannenhalli S."/>
            <person name="Turner R."/>
            <person name="Yooseph S."/>
            <person name="Lu F."/>
            <person name="Nusskern D.R."/>
            <person name="Shue B.C."/>
            <person name="Zheng X.H."/>
            <person name="Zhong F."/>
            <person name="Delcher A.L."/>
            <person name="Huson D.H."/>
            <person name="Kravitz S.A."/>
            <person name="Mouchard L."/>
            <person name="Reinert K."/>
            <person name="Remington K.A."/>
            <person name="Clark A.G."/>
            <person name="Waterman M.S."/>
            <person name="Eichler E.E."/>
            <person name="Adams M.D."/>
            <person name="Hunkapiller M.W."/>
            <person name="Myers E.W."/>
            <person name="Venter J.C."/>
        </authorList>
    </citation>
    <scope>NUCLEOTIDE SEQUENCE [LARGE SCALE GENOMIC DNA]</scope>
</reference>
<reference key="5">
    <citation type="journal article" date="2004" name="Genome Res.">
        <title>The status, quality, and expansion of the NIH full-length cDNA project: the Mammalian Gene Collection (MGC).</title>
        <authorList>
            <consortium name="The MGC Project Team"/>
        </authorList>
    </citation>
    <scope>NUCLEOTIDE SEQUENCE [LARGE SCALE MRNA] (ISOFORM 3)</scope>
    <scope>VARIANT PRO-33</scope>
    <source>
        <tissue>Colon</tissue>
    </source>
</reference>
<reference key="6">
    <citation type="journal article" date="2003" name="Biochim. Biophys. Acta">
        <title>The LZT proteins; the LIV-1 subfamily of zinc transporters.</title>
        <authorList>
            <person name="Taylor K.M."/>
            <person name="Nicholson R.I."/>
        </authorList>
    </citation>
    <scope>SUBUNIT</scope>
    <scope>MOTIF</scope>
</reference>
<reference key="7">
    <citation type="journal article" date="2005" name="FEBS Lett.">
        <title>Structure-function analysis of a novel member of the LIV-1 subfamily of zinc transporters, ZIP14.</title>
        <authorList>
            <person name="Taylor K.M."/>
            <person name="Morgan H.E."/>
            <person name="Johnson A."/>
            <person name="Nicholson R.I."/>
        </authorList>
    </citation>
    <scope>FUNCTION</scope>
    <scope>TRANSPORTER ACTIVITY</scope>
    <scope>SUBCELLULAR LOCATION</scope>
    <scope>TISSUE SPECIFICITY</scope>
</reference>
<reference key="8">
    <citation type="journal article" date="2008" name="Mol. Pharmacol.">
        <title>Slc39a14 gene encodes ZIP14, a metal/bicarbonate symporter: similarities to the ZIP8 transporter.</title>
        <authorList>
            <person name="Girijashanker K."/>
            <person name="He L."/>
            <person name="Soleimani M."/>
            <person name="Reed J.M."/>
            <person name="Li H."/>
            <person name="Liu Z."/>
            <person name="Wang B."/>
            <person name="Dalton T.P."/>
            <person name="Nebert D.W."/>
        </authorList>
    </citation>
    <scope>ALTERNATIVE SPLICING (ISOFORMS 1 AND 2)</scope>
</reference>
<reference key="9">
    <citation type="journal article" date="2009" name="J. Proteome Res.">
        <title>Glycoproteomics analysis of human liver tissue by combination of multiple enzyme digestion and hydrazide chemistry.</title>
        <authorList>
            <person name="Chen R."/>
            <person name="Jiang X."/>
            <person name="Sun D."/>
            <person name="Han G."/>
            <person name="Wang F."/>
            <person name="Ye M."/>
            <person name="Wang L."/>
            <person name="Zou H."/>
        </authorList>
    </citation>
    <scope>GLYCOSYLATION [LARGE SCALE ANALYSIS] AT ASN-77</scope>
    <source>
        <tissue>Liver</tissue>
    </source>
</reference>
<reference key="10">
    <citation type="journal article" date="2009" name="Nat. Biotechnol.">
        <title>Mass-spectrometric identification and relative quantification of N-linked cell surface glycoproteins.</title>
        <authorList>
            <person name="Wollscheid B."/>
            <person name="Bausch-Fluck D."/>
            <person name="Henderson C."/>
            <person name="O'Brien R."/>
            <person name="Bibel M."/>
            <person name="Schiess R."/>
            <person name="Aebersold R."/>
            <person name="Watts J.D."/>
        </authorList>
    </citation>
    <scope>GLYCOSYLATION [LARGE SCALE ANALYSIS] AT ASN-77 AND ASN-102</scope>
    <source>
        <tissue>Leukemic T-cell</tissue>
    </source>
</reference>
<reference key="11">
    <citation type="journal article" date="2010" name="J. Biol. Chem.">
        <title>ZRT/IRT-like protein 14 (ZIP14) promotes the cellular assimilation of iron from transferrin.</title>
        <authorList>
            <person name="Zhao N."/>
            <person name="Gao J."/>
            <person name="Enns C.A."/>
            <person name="Knutson M.D."/>
        </authorList>
    </citation>
    <scope>FUNCTION</scope>
    <scope>SUBCELLULAR LOCATION</scope>
    <scope>TISSUE SPECIFICITY</scope>
</reference>
<reference key="12">
    <citation type="journal article" date="2011" name="BMC Syst. Biol.">
        <title>Initial characterization of the human central proteome.</title>
        <authorList>
            <person name="Burkard T.R."/>
            <person name="Planyavsky M."/>
            <person name="Kaupe I."/>
            <person name="Breitwieser F.P."/>
            <person name="Buerckstuemmer T."/>
            <person name="Bennett K.L."/>
            <person name="Superti-Furga G."/>
            <person name="Colinge J."/>
        </authorList>
    </citation>
    <scope>IDENTIFICATION BY MASS SPECTROMETRY [LARGE SCALE ANALYSIS]</scope>
</reference>
<reference key="13">
    <citation type="journal article" date="2013" name="Inflamm. Res.">
        <title>Zip14 expression induced by lipopolysaccharides in macrophages attenuates inflammatory response.</title>
        <authorList>
            <person name="Sayadi A."/>
            <person name="Nguyen A.T."/>
            <person name="Bard F.A."/>
            <person name="Bard-Chapeau E.A."/>
        </authorList>
    </citation>
    <scope>FUNCTION</scope>
    <scope>INDUCTION</scope>
    <scope>TISSUE SPECIFICITY</scope>
</reference>
<reference key="14">
    <citation type="journal article" date="2014" name="J. Proteomics">
        <title>An enzyme assisted RP-RPLC approach for in-depth analysis of human liver phosphoproteome.</title>
        <authorList>
            <person name="Bian Y."/>
            <person name="Song C."/>
            <person name="Cheng K."/>
            <person name="Dong M."/>
            <person name="Wang F."/>
            <person name="Huang J."/>
            <person name="Sun D."/>
            <person name="Wang L."/>
            <person name="Ye M."/>
            <person name="Zou H."/>
        </authorList>
    </citation>
    <scope>IDENTIFICATION BY MASS SPECTROMETRY [LARGE SCALE ANALYSIS]</scope>
    <source>
        <tissue>Liver</tissue>
    </source>
</reference>
<reference key="15">
    <citation type="journal article" date="2014" name="Proc. Natl. Acad. Sci. U.S.A.">
        <title>An iron-regulated and glycosylation-dependent proteasomal degradation pathway for the plasma membrane metal transporter ZIP14.</title>
        <authorList>
            <person name="Zhao N."/>
            <person name="Zhang A.S."/>
            <person name="Worthen C."/>
            <person name="Knutson M.D."/>
            <person name="Enns C.A."/>
        </authorList>
    </citation>
    <scope>INDUCTION BY IRON</scope>
    <scope>UBIQUITINATION</scope>
    <scope>MUTAGENESIS OF ASN-77; ASN-87 AND ASN-102</scope>
    <scope>GLYCOSYLATION AT ASN-77; ASN-87 AND ASN-102</scope>
</reference>
<reference key="16">
    <citation type="journal article" date="2016" name="J. Biol. Chem.">
        <title>Hepatic ZIP14-mediated Zinc Transport Contributes to Endosomal Insulin Receptor Trafficking and Glucose Metabolism.</title>
        <authorList>
            <person name="Aydemir T.B."/>
            <person name="Troche C."/>
            <person name="Kim M.H."/>
            <person name="Cousins R.J."/>
        </authorList>
    </citation>
    <scope>FUNCTION</scope>
    <scope>SUBCELLULAR LOCATION</scope>
</reference>
<reference key="17">
    <citation type="journal article" date="2017" name="Proc. Natl. Acad. Sci. U.S.A.">
        <title>Hepatic ZIP14-mediated zinc transport is required for adaptation to endoplasmic reticulum stress.</title>
        <authorList>
            <person name="Kim M.H."/>
            <person name="Aydemir T.B."/>
            <person name="Kim J."/>
            <person name="Cousins R.J."/>
        </authorList>
    </citation>
    <scope>INDUCTION</scope>
</reference>
<reference key="18">
    <citation type="journal article" date="2019" name="J. Biol. Chem.">
        <title>The intestinal metal transporter ZIP14 maintains systemic manganese homeostasis.</title>
        <authorList>
            <person name="Scheiber I.F."/>
            <person name="Wu Y."/>
            <person name="Morgan S.E."/>
            <person name="Zhao N."/>
        </authorList>
    </citation>
    <scope>FUNCTION</scope>
    <scope>SUBCELLULAR LOCATION</scope>
</reference>
<reference key="19">
    <citation type="journal article" date="2019" name="J. Biol. Chem.">
        <title>The solute carriers ZIP8 and ZIP14 regulate manganese accumulation in brain microvascular endothelial cells and control brain manganese levels.</title>
        <authorList>
            <person name="Steimle B.L."/>
            <person name="Smith F.M."/>
            <person name="Kosman D.J."/>
        </authorList>
    </citation>
    <scope>FUNCTION</scope>
    <scope>TRANSPORTER ACTIVITY</scope>
    <scope>SUBCELLULAR LOCATION</scope>
    <scope>TISSUE SPECIFICITY</scope>
</reference>
<reference key="20">
    <citation type="journal article" date="2016" name="Nat. Commun.">
        <title>Mutations in SLC39A14 disrupt manganese homeostasis and cause childhood-onset parkinsonism-dystonia.</title>
        <authorList>
            <person name="Tuschl K."/>
            <person name="Meyer E."/>
            <person name="Valdivia L.E."/>
            <person name="Zhao N."/>
            <person name="Dadswell C."/>
            <person name="Abdul-Sada A."/>
            <person name="Hung C.Y."/>
            <person name="Simpson M.A."/>
            <person name="Chong W.K."/>
            <person name="Jacques T.S."/>
            <person name="Woltjer R.L."/>
            <person name="Eaton S."/>
            <person name="Gregory A."/>
            <person name="Sanford L."/>
            <person name="Kara E."/>
            <person name="Houlden H."/>
            <person name="Cuno S.M."/>
            <person name="Prokisch H."/>
            <person name="Valletta L."/>
            <person name="Tiranti V."/>
            <person name="Younis R."/>
            <person name="Maher E.R."/>
            <person name="Spencer J."/>
            <person name="Straatman-Iwanowska A."/>
            <person name="Gissen P."/>
            <person name="Selim L.A."/>
            <person name="Pintos-Morell G."/>
            <person name="Coroleu-Lletget W."/>
            <person name="Mohammad S.S."/>
            <person name="Yoganathan S."/>
            <person name="Dale R.C."/>
            <person name="Thomas M."/>
            <person name="Rihel J."/>
            <person name="Bodamer O.A."/>
            <person name="Enns C.A."/>
            <person name="Hayflick S.J."/>
            <person name="Clayton P.T."/>
            <person name="Mills P.B."/>
            <person name="Kurian M.A."/>
            <person name="Wilson S.W."/>
        </authorList>
    </citation>
    <scope>FUNCTION</scope>
    <scope>SUBCELLULAR LOCATION</scope>
    <scope>TISSUE SPECIFICITY (ISOFORM 2)</scope>
    <scope>INVOLVEMENT IN HMNDYT2</scope>
    <scope>MOTIF</scope>
    <scope>VARIANTS HMNDYT2 VAL-98; ARG-383 AND LYS-469</scope>
    <scope>CHARACTERIZATION OF VARIANTS HMNDYT2 VAL-98; ARG-383 AND LYS-469</scope>
</reference>
<reference key="21">
    <citation type="journal article" date="2018" name="PLoS Genet.">
        <title>Conditional mouse models support the role of SLC39A14 (ZIP14) in Hyperostosis Cranialis Interna and in bone homeostasis.</title>
        <authorList>
            <person name="Hendrickx G."/>
            <person name="Borra V.M."/>
            <person name="Steenackers E."/>
            <person name="Yorgan T.A."/>
            <person name="Hermans C."/>
            <person name="Boudin E."/>
            <person name="Waterval J.J."/>
            <person name="Jansen I.D.C."/>
            <person name="Aydemir T.B."/>
            <person name="Kamerling N."/>
            <person name="Behets G.J."/>
            <person name="Plumeyer C."/>
            <person name="D'Haese P.C."/>
            <person name="Busse B."/>
            <person name="Everts V."/>
            <person name="Lammens M."/>
            <person name="Mortier G."/>
            <person name="Cousins R.J."/>
            <person name="Schinke T."/>
            <person name="Stokroos R.J."/>
            <person name="Manni J.J."/>
            <person name="Van Hul W."/>
        </authorList>
    </citation>
    <scope>INVOLVEMENT IN HCIN</scope>
    <scope>VARIANT HCIN ARG-441</scope>
    <scope>CHARACTERIZATION OF VARIANT HCIN ARG-441</scope>
    <scope>FUNCTION</scope>
    <scope>SUBCELLULAR LOCATION</scope>
    <scope>TISSUE SPECIFICITY</scope>
</reference>
<sequence length="492" mass="54212">MKLLLLHPAFQSCLLLTLLGLWRTTPEAHASSLGAPAISAASFLQDLIHRYGEGDSLTLQQLKALLNHLDVGVGRGNVTQHVQGHRNLSTCFSSGDLFTAHNFSEQSRIGSSELQEFCPTILQQLDSRACTSENQENEENEQTEEGRPSAVEVWGYGLLCVTVISLCSLLGASVVPFMKKTFYKRLLLYFIALAIGTLYSNALFQLIPEAFGFNPLEDYYVSKSAVVFGGFYLFFFTEKILKILLKQKNEHHHGHSHYASESLPSKKDQEEGVMEKLQNGDLDHMIPQHCSSELDGKAPMVDEKVIVGSLSVQDLQASQSACYWLKGVRYSDIGTLAWMITLSDGLHNFIDGLAIGASFTVSVFQGISTSVAILCEEFPHELGDFVILLNAGMSIQQALFFNFLSACCCYLGLAFGILAGSHFSANWIFALAGGMFLYISLADMFPEMNEVCQEDERKGSILIPFIIQNLGLLTGFTIMVVLTMYSGQIQIG</sequence>
<accession>Q15043</accession>
<accession>A6NH98</accession>
<accession>B4DIW3</accession>
<accession>B6EU88</accession>
<accession>D3DSR4</accession>
<accession>Q6ZME8</accession>
<accession>Q96BB3</accession>
<keyword id="KW-0025">Alternative splicing</keyword>
<keyword id="KW-1003">Cell membrane</keyword>
<keyword id="KW-0225">Disease variant</keyword>
<keyword id="KW-1023">Dystonia</keyword>
<keyword id="KW-0967">Endosome</keyword>
<keyword id="KW-0325">Glycoprotein</keyword>
<keyword id="KW-0406">Ion transport</keyword>
<keyword id="KW-0458">Lysosome</keyword>
<keyword id="KW-0472">Membrane</keyword>
<keyword id="KW-0523">Neurodegeneration</keyword>
<keyword id="KW-0908">Parkinsonism</keyword>
<keyword id="KW-1267">Proteomics identification</keyword>
<keyword id="KW-1185">Reference proteome</keyword>
<keyword id="KW-0732">Signal</keyword>
<keyword id="KW-0812">Transmembrane</keyword>
<keyword id="KW-1133">Transmembrane helix</keyword>
<keyword id="KW-0813">Transport</keyword>
<keyword id="KW-0832">Ubl conjugation</keyword>
<keyword id="KW-0862">Zinc</keyword>
<keyword id="KW-0864">Zinc transport</keyword>
<gene>
    <name evidence="31" type="primary">SLC39A14</name>
    <name evidence="30" type="synonym">KIAA0062</name>
    <name evidence="21" type="synonym">ZIP14</name>
</gene>
<name>S39AE_HUMAN</name>
<dbReference type="EMBL" id="D31887">
    <property type="protein sequence ID" value="BAA06685.1"/>
    <property type="status" value="ALT_INIT"/>
    <property type="molecule type" value="mRNA"/>
</dbReference>
<dbReference type="EMBL" id="AK172810">
    <property type="protein sequence ID" value="BAD18780.1"/>
    <property type="molecule type" value="mRNA"/>
</dbReference>
<dbReference type="EMBL" id="AK295807">
    <property type="protein sequence ID" value="BAG58625.1"/>
    <property type="molecule type" value="mRNA"/>
</dbReference>
<dbReference type="EMBL" id="AC087854">
    <property type="status" value="NOT_ANNOTATED_CDS"/>
    <property type="molecule type" value="Genomic_DNA"/>
</dbReference>
<dbReference type="EMBL" id="AC105910">
    <property type="status" value="NOT_ANNOTATED_CDS"/>
    <property type="molecule type" value="Genomic_DNA"/>
</dbReference>
<dbReference type="EMBL" id="CH471080">
    <property type="protein sequence ID" value="EAW63681.1"/>
    <property type="molecule type" value="Genomic_DNA"/>
</dbReference>
<dbReference type="EMBL" id="CH471080">
    <property type="protein sequence ID" value="EAW63682.1"/>
    <property type="molecule type" value="Genomic_DNA"/>
</dbReference>
<dbReference type="EMBL" id="CH471080">
    <property type="protein sequence ID" value="EAW63683.1"/>
    <property type="molecule type" value="Genomic_DNA"/>
</dbReference>
<dbReference type="EMBL" id="BC015770">
    <property type="protein sequence ID" value="AAH15770.1"/>
    <property type="molecule type" value="mRNA"/>
</dbReference>
<dbReference type="CCDS" id="CCDS47822.1">
    <molecule id="Q15043-2"/>
</dbReference>
<dbReference type="CCDS" id="CCDS47823.1">
    <molecule id="Q15043-1"/>
</dbReference>
<dbReference type="CCDS" id="CCDS6030.1">
    <molecule id="Q15043-3"/>
</dbReference>
<dbReference type="RefSeq" id="NP_001121903.1">
    <molecule id="Q15043-1"/>
    <property type="nucleotide sequence ID" value="NM_001128431.4"/>
</dbReference>
<dbReference type="RefSeq" id="NP_001128625.1">
    <molecule id="Q15043-1"/>
    <property type="nucleotide sequence ID" value="NM_001135153.3"/>
</dbReference>
<dbReference type="RefSeq" id="NP_001128626.1">
    <molecule id="Q15043-2"/>
    <property type="nucleotide sequence ID" value="NM_001135154.3"/>
</dbReference>
<dbReference type="RefSeq" id="NP_001338584.1">
    <molecule id="Q15043-1"/>
    <property type="nucleotide sequence ID" value="NM_001351655.2"/>
</dbReference>
<dbReference type="RefSeq" id="NP_001338585.1">
    <molecule id="Q15043-1"/>
    <property type="nucleotide sequence ID" value="NM_001351656.2"/>
</dbReference>
<dbReference type="RefSeq" id="NP_001338589.1">
    <molecule id="Q15043-1"/>
    <property type="nucleotide sequence ID" value="NM_001351660.2"/>
</dbReference>
<dbReference type="RefSeq" id="NP_056174.2">
    <molecule id="Q15043-3"/>
    <property type="nucleotide sequence ID" value="NM_015359.6"/>
</dbReference>
<dbReference type="RefSeq" id="XP_005273522.1">
    <property type="nucleotide sequence ID" value="XM_005273465.2"/>
</dbReference>
<dbReference type="RefSeq" id="XP_005273523.1">
    <property type="nucleotide sequence ID" value="XM_005273466.4"/>
</dbReference>
<dbReference type="RefSeq" id="XP_006716387.1">
    <molecule id="Q15043-1"/>
    <property type="nucleotide sequence ID" value="XM_006716324.4"/>
</dbReference>
<dbReference type="RefSeq" id="XP_011542780.1">
    <property type="nucleotide sequence ID" value="XM_011544478.2"/>
</dbReference>
<dbReference type="RefSeq" id="XP_016868783.1">
    <property type="nucleotide sequence ID" value="XM_017013294.1"/>
</dbReference>
<dbReference type="RefSeq" id="XP_016868784.1">
    <property type="nucleotide sequence ID" value="XM_017013295.1"/>
</dbReference>
<dbReference type="RefSeq" id="XP_047277610.1">
    <molecule id="Q15043-1"/>
    <property type="nucleotide sequence ID" value="XM_047421654.1"/>
</dbReference>
<dbReference type="RefSeq" id="XP_047277611.1">
    <molecule id="Q15043-1"/>
    <property type="nucleotide sequence ID" value="XM_047421655.1"/>
</dbReference>
<dbReference type="SMR" id="Q15043"/>
<dbReference type="BioGRID" id="117063">
    <property type="interactions" value="128"/>
</dbReference>
<dbReference type="FunCoup" id="Q15043">
    <property type="interactions" value="631"/>
</dbReference>
<dbReference type="IntAct" id="Q15043">
    <property type="interactions" value="39"/>
</dbReference>
<dbReference type="MINT" id="Q15043"/>
<dbReference type="STRING" id="9606.ENSP00000370635"/>
<dbReference type="DrugBank" id="DB06757">
    <property type="generic name" value="Manganese cation"/>
</dbReference>
<dbReference type="DrugBank" id="DB14533">
    <property type="generic name" value="Zinc chloride"/>
</dbReference>
<dbReference type="DrugBank" id="DB14548">
    <property type="generic name" value="Zinc sulfate, unspecified form"/>
</dbReference>
<dbReference type="TCDB" id="2.A.5.4.5">
    <property type="family name" value="the zinc (zn(2+))-iron (fe(2+)) permease (zip) family"/>
</dbReference>
<dbReference type="GlyCosmos" id="Q15043">
    <property type="glycosylation" value="3 sites, No reported glycans"/>
</dbReference>
<dbReference type="GlyGen" id="Q15043">
    <property type="glycosylation" value="4 sites, 21 N-linked glycans (3 sites), 1 O-linked glycan (1 site)"/>
</dbReference>
<dbReference type="iPTMnet" id="Q15043"/>
<dbReference type="PhosphoSitePlus" id="Q15043"/>
<dbReference type="SwissPalm" id="Q15043"/>
<dbReference type="BioMuta" id="SLC39A14"/>
<dbReference type="DMDM" id="313104191"/>
<dbReference type="jPOST" id="Q15043"/>
<dbReference type="MassIVE" id="Q15043"/>
<dbReference type="PaxDb" id="9606-ENSP00000352779"/>
<dbReference type="PeptideAtlas" id="Q15043"/>
<dbReference type="ProteomicsDB" id="60392">
    <molecule id="Q15043-1"/>
</dbReference>
<dbReference type="ProteomicsDB" id="60393">
    <molecule id="Q15043-2"/>
</dbReference>
<dbReference type="ProteomicsDB" id="60394">
    <molecule id="Q15043-3"/>
</dbReference>
<dbReference type="Pumba" id="Q15043"/>
<dbReference type="Antibodypedia" id="9517">
    <property type="antibodies" value="191 antibodies from 27 providers"/>
</dbReference>
<dbReference type="DNASU" id="23516"/>
<dbReference type="Ensembl" id="ENST00000240095.10">
    <molecule id="Q15043-2"/>
    <property type="protein sequence ID" value="ENSP00000240095.6"/>
    <property type="gene ID" value="ENSG00000104635.15"/>
</dbReference>
<dbReference type="Ensembl" id="ENST00000289952.9">
    <molecule id="Q15043-1"/>
    <property type="protein sequence ID" value="ENSP00000289952.5"/>
    <property type="gene ID" value="ENSG00000104635.15"/>
</dbReference>
<dbReference type="Ensembl" id="ENST00000359741.10">
    <molecule id="Q15043-3"/>
    <property type="protein sequence ID" value="ENSP00000352779.5"/>
    <property type="gene ID" value="ENSG00000104635.15"/>
</dbReference>
<dbReference type="Ensembl" id="ENST00000381237.6">
    <molecule id="Q15043-1"/>
    <property type="protein sequence ID" value="ENSP00000370635.1"/>
    <property type="gene ID" value="ENSG00000104635.15"/>
</dbReference>
<dbReference type="GeneID" id="23516"/>
<dbReference type="KEGG" id="hsa:23516"/>
<dbReference type="MANE-Select" id="ENST00000381237.6">
    <property type="protein sequence ID" value="ENSP00000370635.1"/>
    <property type="RefSeq nucleotide sequence ID" value="NM_001128431.4"/>
    <property type="RefSeq protein sequence ID" value="NP_001121903.1"/>
</dbReference>
<dbReference type="UCSC" id="uc003xbp.5">
    <molecule id="Q15043-1"/>
    <property type="organism name" value="human"/>
</dbReference>
<dbReference type="AGR" id="HGNC:20858"/>
<dbReference type="CTD" id="23516"/>
<dbReference type="DisGeNET" id="23516"/>
<dbReference type="GeneCards" id="SLC39A14"/>
<dbReference type="GeneReviews" id="SLC39A14"/>
<dbReference type="HGNC" id="HGNC:20858">
    <property type="gene designation" value="SLC39A14"/>
</dbReference>
<dbReference type="HPA" id="ENSG00000104635">
    <property type="expression patterns" value="Tissue enhanced (liver, pancreas)"/>
</dbReference>
<dbReference type="MalaCards" id="SLC39A14"/>
<dbReference type="MIM" id="144755">
    <property type="type" value="phenotype"/>
</dbReference>
<dbReference type="MIM" id="608736">
    <property type="type" value="gene"/>
</dbReference>
<dbReference type="MIM" id="617013">
    <property type="type" value="phenotype"/>
</dbReference>
<dbReference type="neXtProt" id="NX_Q15043"/>
<dbReference type="OpenTargets" id="ENSG00000104635"/>
<dbReference type="Orphanet" id="521406">
    <property type="disease" value="Dystonia-parkinsonism-hypermanganesemia syndrome"/>
</dbReference>
<dbReference type="PharmGKB" id="PA134863701"/>
<dbReference type="VEuPathDB" id="HostDB:ENSG00000104635"/>
<dbReference type="eggNOG" id="KOG2693">
    <property type="taxonomic scope" value="Eukaryota"/>
</dbReference>
<dbReference type="GeneTree" id="ENSGT00940000157986"/>
<dbReference type="InParanoid" id="Q15043"/>
<dbReference type="OMA" id="ADHYSTP"/>
<dbReference type="OrthoDB" id="200954at2759"/>
<dbReference type="PAN-GO" id="Q15043">
    <property type="GO annotations" value="4 GO annotations based on evolutionary models"/>
</dbReference>
<dbReference type="PhylomeDB" id="Q15043"/>
<dbReference type="TreeFam" id="TF318470"/>
<dbReference type="PathwayCommons" id="Q15043"/>
<dbReference type="Reactome" id="R-HSA-442380">
    <property type="pathway name" value="Zinc influx into cells by the SLC39 gene family"/>
</dbReference>
<dbReference type="SignaLink" id="Q15043"/>
<dbReference type="BioGRID-ORCS" id="23516">
    <property type="hits" value="16 hits in 1166 CRISPR screens"/>
</dbReference>
<dbReference type="ChiTaRS" id="SLC39A14">
    <property type="organism name" value="human"/>
</dbReference>
<dbReference type="GenomeRNAi" id="23516"/>
<dbReference type="Pharos" id="Q15043">
    <property type="development level" value="Tbio"/>
</dbReference>
<dbReference type="PRO" id="PR:Q15043"/>
<dbReference type="Proteomes" id="UP000005640">
    <property type="component" value="Chromosome 8"/>
</dbReference>
<dbReference type="RNAct" id="Q15043">
    <property type="molecule type" value="protein"/>
</dbReference>
<dbReference type="Bgee" id="ENSG00000104635">
    <property type="expression patterns" value="Expressed in cartilage tissue and 199 other cell types or tissues"/>
</dbReference>
<dbReference type="ExpressionAtlas" id="Q15043">
    <property type="expression patterns" value="baseline and differential"/>
</dbReference>
<dbReference type="GO" id="GO:0016324">
    <property type="term" value="C:apical plasma membrane"/>
    <property type="evidence" value="ECO:0000314"/>
    <property type="project" value="UniProtKB"/>
</dbReference>
<dbReference type="GO" id="GO:0016323">
    <property type="term" value="C:basolateral plasma membrane"/>
    <property type="evidence" value="ECO:0000314"/>
    <property type="project" value="UniProtKB"/>
</dbReference>
<dbReference type="GO" id="GO:0031901">
    <property type="term" value="C:early endosome membrane"/>
    <property type="evidence" value="ECO:0000314"/>
    <property type="project" value="UniProtKB"/>
</dbReference>
<dbReference type="GO" id="GO:0031902">
    <property type="term" value="C:late endosome membrane"/>
    <property type="evidence" value="ECO:0000314"/>
    <property type="project" value="UniProtKB"/>
</dbReference>
<dbReference type="GO" id="GO:0005765">
    <property type="term" value="C:lysosomal membrane"/>
    <property type="evidence" value="ECO:0000314"/>
    <property type="project" value="UniProtKB"/>
</dbReference>
<dbReference type="GO" id="GO:0016020">
    <property type="term" value="C:membrane"/>
    <property type="evidence" value="ECO:0000314"/>
    <property type="project" value="BHF-UCL"/>
</dbReference>
<dbReference type="GO" id="GO:0005886">
    <property type="term" value="C:plasma membrane"/>
    <property type="evidence" value="ECO:0000314"/>
    <property type="project" value="UniProtKB"/>
</dbReference>
<dbReference type="GO" id="GO:0015086">
    <property type="term" value="F:cadmium ion transmembrane transporter activity"/>
    <property type="evidence" value="ECO:0000250"/>
    <property type="project" value="UniProtKB"/>
</dbReference>
<dbReference type="GO" id="GO:0015093">
    <property type="term" value="F:ferrous iron transmembrane transporter activity"/>
    <property type="evidence" value="ECO:0007669"/>
    <property type="project" value="Ensembl"/>
</dbReference>
<dbReference type="GO" id="GO:0005381">
    <property type="term" value="F:iron ion transmembrane transporter activity"/>
    <property type="evidence" value="ECO:0000250"/>
    <property type="project" value="UniProtKB"/>
</dbReference>
<dbReference type="GO" id="GO:0005384">
    <property type="term" value="F:manganese ion transmembrane transporter activity"/>
    <property type="evidence" value="ECO:0000314"/>
    <property type="project" value="UniProtKB"/>
</dbReference>
<dbReference type="GO" id="GO:0015296">
    <property type="term" value="F:monoatomic anion:monoatomic cation symporter activity"/>
    <property type="evidence" value="ECO:0000250"/>
    <property type="project" value="UniProtKB"/>
</dbReference>
<dbReference type="GO" id="GO:0140410">
    <property type="term" value="F:monoatomic cation:bicarbonate symporter activity"/>
    <property type="evidence" value="ECO:0000314"/>
    <property type="project" value="UniProtKB"/>
</dbReference>
<dbReference type="GO" id="GO:0005385">
    <property type="term" value="F:zinc ion transmembrane transporter activity"/>
    <property type="evidence" value="ECO:0000314"/>
    <property type="project" value="BHF-UCL"/>
</dbReference>
<dbReference type="GO" id="GO:0071333">
    <property type="term" value="P:cellular response to glucose stimulus"/>
    <property type="evidence" value="ECO:0000250"/>
    <property type="project" value="UniProtKB"/>
</dbReference>
<dbReference type="GO" id="GO:0032869">
    <property type="term" value="P:cellular response to insulin stimulus"/>
    <property type="evidence" value="ECO:0000250"/>
    <property type="project" value="UniProtKB"/>
</dbReference>
<dbReference type="GO" id="GO:0002062">
    <property type="term" value="P:chondrocyte differentiation"/>
    <property type="evidence" value="ECO:0000250"/>
    <property type="project" value="UniProtKB"/>
</dbReference>
<dbReference type="GO" id="GO:0006094">
    <property type="term" value="P:gluconeogenesis"/>
    <property type="evidence" value="ECO:0000250"/>
    <property type="project" value="UniProtKB"/>
</dbReference>
<dbReference type="GO" id="GO:0098739">
    <property type="term" value="P:import across plasma membrane"/>
    <property type="evidence" value="ECO:0000315"/>
    <property type="project" value="UniProtKB"/>
</dbReference>
<dbReference type="GO" id="GO:0098662">
    <property type="term" value="P:inorganic cation transmembrane transport"/>
    <property type="evidence" value="ECO:0000250"/>
    <property type="project" value="UniProtKB"/>
</dbReference>
<dbReference type="GO" id="GO:0008286">
    <property type="term" value="P:insulin receptor signaling pathway"/>
    <property type="evidence" value="ECO:0000250"/>
    <property type="project" value="UniProtKB"/>
</dbReference>
<dbReference type="GO" id="GO:0030003">
    <property type="term" value="P:intracellular monoatomic cation homeostasis"/>
    <property type="evidence" value="ECO:0000318"/>
    <property type="project" value="GO_Central"/>
</dbReference>
<dbReference type="GO" id="GO:0006882">
    <property type="term" value="P:intracellular zinc ion homeostasis"/>
    <property type="evidence" value="ECO:0000314"/>
    <property type="project" value="BHF-UCL"/>
</dbReference>
<dbReference type="GO" id="GO:0033212">
    <property type="term" value="P:iron import into cell"/>
    <property type="evidence" value="ECO:0000315"/>
    <property type="project" value="UniProtKB"/>
</dbReference>
<dbReference type="GO" id="GO:0034755">
    <property type="term" value="P:iron ion transmembrane transport"/>
    <property type="evidence" value="ECO:0000315"/>
    <property type="project" value="UniProtKB"/>
</dbReference>
<dbReference type="GO" id="GO:0055071">
    <property type="term" value="P:manganese ion homeostasis"/>
    <property type="evidence" value="ECO:0000250"/>
    <property type="project" value="UniProtKB"/>
</dbReference>
<dbReference type="GO" id="GO:0071421">
    <property type="term" value="P:manganese ion transmembrane transport"/>
    <property type="evidence" value="ECO:0000315"/>
    <property type="project" value="UniProtKB"/>
</dbReference>
<dbReference type="GO" id="GO:0045745">
    <property type="term" value="P:positive regulation of G protein-coupled receptor signaling pathway"/>
    <property type="evidence" value="ECO:0000250"/>
    <property type="project" value="UniProtKB"/>
</dbReference>
<dbReference type="GO" id="GO:0010817">
    <property type="term" value="P:regulation of hormone levels"/>
    <property type="evidence" value="ECO:0000250"/>
    <property type="project" value="UniProtKB"/>
</dbReference>
<dbReference type="GO" id="GO:0071578">
    <property type="term" value="P:zinc ion import across plasma membrane"/>
    <property type="evidence" value="ECO:0000314"/>
    <property type="project" value="UniProtKB"/>
</dbReference>
<dbReference type="GO" id="GO:0071577">
    <property type="term" value="P:zinc ion transmembrane transport"/>
    <property type="evidence" value="ECO:0000314"/>
    <property type="project" value="BHF-UCL"/>
</dbReference>
<dbReference type="InterPro" id="IPR003689">
    <property type="entry name" value="ZIP"/>
</dbReference>
<dbReference type="InterPro" id="IPR050799">
    <property type="entry name" value="ZIP_Transporter"/>
</dbReference>
<dbReference type="PANTHER" id="PTHR12191:SF5">
    <property type="entry name" value="METAL CATION SYMPORTER ZIP14"/>
    <property type="match status" value="1"/>
</dbReference>
<dbReference type="PANTHER" id="PTHR12191">
    <property type="entry name" value="SOLUTE CARRIER FAMILY 39"/>
    <property type="match status" value="1"/>
</dbReference>
<dbReference type="Pfam" id="PF02535">
    <property type="entry name" value="Zip"/>
    <property type="match status" value="1"/>
</dbReference>
<proteinExistence type="evidence at protein level"/>
<feature type="signal peptide" evidence="2">
    <location>
        <begin position="1"/>
        <end position="30"/>
    </location>
</feature>
<feature type="chain" id="PRO_0000312194" description="Metal cation symporter ZIP14">
    <location>
        <begin position="31"/>
        <end position="492"/>
    </location>
</feature>
<feature type="topological domain" description="Extracellular" evidence="2">
    <location>
        <begin position="31"/>
        <end position="157"/>
    </location>
</feature>
<feature type="transmembrane region" description="Helical" evidence="2">
    <location>
        <begin position="158"/>
        <end position="178"/>
    </location>
</feature>
<feature type="topological domain" description="Cytoplasmic" evidence="2">
    <location>
        <begin position="179"/>
        <end position="186"/>
    </location>
</feature>
<feature type="transmembrane region" description="Helical" evidence="2">
    <location>
        <begin position="187"/>
        <end position="207"/>
    </location>
</feature>
<feature type="topological domain" description="Extracellular" evidence="2">
    <location>
        <begin position="208"/>
        <end position="224"/>
    </location>
</feature>
<feature type="transmembrane region" description="Helical" evidence="2">
    <location>
        <begin position="225"/>
        <end position="245"/>
    </location>
</feature>
<feature type="topological domain" description="Cytoplasmic" evidence="2">
    <location>
        <begin position="246"/>
        <end position="397"/>
    </location>
</feature>
<feature type="transmembrane region" description="Helical" evidence="2">
    <location>
        <begin position="398"/>
        <end position="418"/>
    </location>
</feature>
<feature type="topological domain" description="Extracellular" evidence="2">
    <location>
        <begin position="419"/>
        <end position="424"/>
    </location>
</feature>
<feature type="transmembrane region" description="Helical" evidence="2">
    <location>
        <begin position="425"/>
        <end position="445"/>
    </location>
</feature>
<feature type="topological domain" description="Cytoplasmic" evidence="2">
    <location>
        <begin position="446"/>
        <end position="460"/>
    </location>
</feature>
<feature type="transmembrane region" description="Helical" evidence="2">
    <location>
        <begin position="461"/>
        <end position="481"/>
    </location>
</feature>
<feature type="topological domain" description="Extracellular" evidence="2">
    <location>
        <begin position="482"/>
        <end position="492"/>
    </location>
</feature>
<feature type="short sequence motif" description="HHHGHXHX-motif" evidence="28">
    <location>
        <begin position="251"/>
        <end position="258"/>
    </location>
</feature>
<feature type="short sequence motif" description="XEXPHE-motif" evidence="25">
    <location>
        <begin position="376"/>
        <end position="381"/>
    </location>
</feature>
<feature type="glycosylation site" description="N-linked (GlcNAc...) asparagine" evidence="6 7 10">
    <location>
        <position position="77"/>
    </location>
</feature>
<feature type="glycosylation site" description="N-linked (GlcNAc...) asparagine" evidence="10">
    <location>
        <position position="87"/>
    </location>
</feature>
<feature type="glycosylation site" description="N-linked (GlcNAc...) asparagine" evidence="7 10">
    <location>
        <position position="102"/>
    </location>
</feature>
<feature type="splice variant" id="VSP_040139" description="In isoform 2." evidence="19">
    <original>YGLLCVTVISLCSLLGASVVPFMKKTFYKRLLLYFIALAIGTLY</original>
    <variation>FGFLSVSLINLASLLGVLVLPCTEKAFFSRVLTYFIALSIGTLL</variation>
    <location>
        <begin position="156"/>
        <end position="199"/>
    </location>
</feature>
<feature type="splice variant" id="VSP_029728" description="In isoform 3." evidence="20">
    <original>FPEMNEVCQEDERKGSILIPFIIQNLGLLTGFTIMVVLTMYSGQIQIG</original>
    <variation>MEFCSVAQAGVQWCHLSSLQPLPLGLKRLSCLSLPSN</variation>
    <location>
        <begin position="445"/>
        <end position="492"/>
    </location>
</feature>
<feature type="sequence variant" id="VAR_037450" description="In dbSNP:rs896378." evidence="4">
    <original>L</original>
    <variation>P</variation>
    <location>
        <position position="33"/>
    </location>
</feature>
<feature type="sequence variant" id="VAR_077004" description="In HMNDYT2; no effect on protein abundance; no effect on subcellular localization at the plasma membrane and within the cytoplasm; decreased manganese ion transmembrane transporter activity; dbSNP:rs879253763." evidence="11">
    <original>F</original>
    <variation>V</variation>
    <location>
        <position position="98"/>
    </location>
</feature>
<feature type="sequence variant" id="VAR_077005" description="In HMNDYT2; no effect on protein abundance; no effect on subcellular localization at the plasma membrane and within the cytoplasm; decreased manganese ion transmembrane transporter activity; dbSNP:rs879253766." evidence="11">
    <original>G</original>
    <variation>R</variation>
    <location>
        <position position="383"/>
    </location>
</feature>
<feature type="sequence variant" id="VAR_080794" description="In HCIN; loss of localization at the plasma membrane; loss of Zn uptake activity; dbSNP:rs1554520924." evidence="14">
    <original>L</original>
    <variation>R</variation>
    <location>
        <position position="441"/>
    </location>
</feature>
<feature type="sequence variant" id="VAR_077006" description="In HMNDYT2; no effect on protein abundance; no effect on subcellular localization at the plasma membrane and within the cytoplasm; decreased manganese ion transmembrane transporter activity; dbSNP:rs750281602." evidence="11">
    <original>N</original>
    <variation>K</variation>
    <location>
        <position position="469"/>
    </location>
</feature>
<feature type="mutagenesis site" description="Decreased N-glycosylation." evidence="10">
    <original>N</original>
    <variation>A</variation>
    <location>
        <position position="77"/>
    </location>
</feature>
<feature type="mutagenesis site" description="Decreased N-glycosylation." evidence="10">
    <original>N</original>
    <variation>A</variation>
    <location>
        <position position="87"/>
    </location>
</feature>
<feature type="mutagenesis site" description="Decreased N-glycosylation." evidence="10">
    <original>N</original>
    <variation>A</variation>
    <location>
        <position position="102"/>
    </location>
</feature>
<feature type="sequence conflict" description="In Ref. 2; BAD18780." evidence="24" ref="2">
    <original>L</original>
    <variation>P</variation>
    <location>
        <position position="57"/>
    </location>
</feature>
<feature type="sequence conflict" description="In Ref. 2; BAG58625." evidence="24" ref="2">
    <original>D</original>
    <variation>G</variation>
    <location>
        <position position="314"/>
    </location>
</feature>
<feature type="sequence conflict" description="In Ref. 2; BAD18780." evidence="24" ref="2">
    <original>H</original>
    <variation>R</variation>
    <location>
        <position position="380"/>
    </location>
</feature>
<protein>
    <recommendedName>
        <fullName evidence="27">Metal cation symporter ZIP14</fullName>
    </recommendedName>
    <alternativeName>
        <fullName evidence="18">LIV-1 subfamily of ZIP zinc transporter 4</fullName>
        <shortName evidence="18">LZT-Hs4</shortName>
    </alternativeName>
    <alternativeName>
        <fullName evidence="31">Solute carrier family 39 member 14</fullName>
    </alternativeName>
    <alternativeName>
        <fullName evidence="21">Zrt- and Irt-like protein 14</fullName>
        <shortName evidence="21">ZIP-14</shortName>
    </alternativeName>
</protein>
<evidence type="ECO:0000250" key="1">
    <source>
        <dbReference type="UniProtKB" id="Q75N73"/>
    </source>
</evidence>
<evidence type="ECO:0000255" key="2"/>
<evidence type="ECO:0000269" key="3">
    <source>
    </source>
</evidence>
<evidence type="ECO:0000269" key="4">
    <source>
    </source>
</evidence>
<evidence type="ECO:0000269" key="5">
    <source>
    </source>
</evidence>
<evidence type="ECO:0000269" key="6">
    <source>
    </source>
</evidence>
<evidence type="ECO:0000269" key="7">
    <source>
    </source>
</evidence>
<evidence type="ECO:0000269" key="8">
    <source>
    </source>
</evidence>
<evidence type="ECO:0000269" key="9">
    <source>
    </source>
</evidence>
<evidence type="ECO:0000269" key="10">
    <source>
    </source>
</evidence>
<evidence type="ECO:0000269" key="11">
    <source>
    </source>
</evidence>
<evidence type="ECO:0000269" key="12">
    <source>
    </source>
</evidence>
<evidence type="ECO:0000269" key="13">
    <source>
    </source>
</evidence>
<evidence type="ECO:0000269" key="14">
    <source>
    </source>
</evidence>
<evidence type="ECO:0000269" key="15">
    <source>
    </source>
</evidence>
<evidence type="ECO:0000269" key="16">
    <source>
    </source>
</evidence>
<evidence type="ECO:0000269" key="17">
    <source>
    </source>
</evidence>
<evidence type="ECO:0000303" key="18">
    <source>
    </source>
</evidence>
<evidence type="ECO:0000303" key="19">
    <source>
    </source>
</evidence>
<evidence type="ECO:0000303" key="20">
    <source>
    </source>
</evidence>
<evidence type="ECO:0000303" key="21">
    <source>
    </source>
</evidence>
<evidence type="ECO:0000303" key="22">
    <source>
    </source>
</evidence>
<evidence type="ECO:0000303" key="23">
    <source>
    </source>
</evidence>
<evidence type="ECO:0000305" key="24"/>
<evidence type="ECO:0000305" key="25">
    <source>
    </source>
</evidence>
<evidence type="ECO:0000305" key="26">
    <source>
    </source>
</evidence>
<evidence type="ECO:0000305" key="27">
    <source>
    </source>
</evidence>
<evidence type="ECO:0000305" key="28">
    <source>
    </source>
</evidence>
<evidence type="ECO:0000305" key="29">
    <source>
    </source>
</evidence>
<evidence type="ECO:0000312" key="30">
    <source>
        <dbReference type="EMBL" id="BAA06685.1"/>
    </source>
</evidence>
<evidence type="ECO:0000312" key="31">
    <source>
        <dbReference type="HGNC" id="HGNC:20858"/>
    </source>
</evidence>
<organism>
    <name type="scientific">Homo sapiens</name>
    <name type="common">Human</name>
    <dbReference type="NCBI Taxonomy" id="9606"/>
    <lineage>
        <taxon>Eukaryota</taxon>
        <taxon>Metazoa</taxon>
        <taxon>Chordata</taxon>
        <taxon>Craniata</taxon>
        <taxon>Vertebrata</taxon>
        <taxon>Euteleostomi</taxon>
        <taxon>Mammalia</taxon>
        <taxon>Eutheria</taxon>
        <taxon>Euarchontoglires</taxon>
        <taxon>Primates</taxon>
        <taxon>Haplorrhini</taxon>
        <taxon>Catarrhini</taxon>
        <taxon>Hominidae</taxon>
        <taxon>Homo</taxon>
    </lineage>
</organism>
<comment type="function">
    <text evidence="1 5 8 9 11 12 14 15 16">Electroneutral transporter of the plasma membrane mediating the cellular uptake of the divalent metal cations zinc, manganese and iron that are important for tissue homeostasis, metabolism, development and immunity (PubMed:15642354, PubMed:27231142, PubMed:29621230). Functions as an energy-dependent symporter, transporting through the membranes an electroneutral complex composed of a divalent metal cation and two bicarbonate anions (By similarity). Beside these endogenous cellular substrates, can also import cadmium a non-essential metal which is cytotoxic and carcinogenic (By similarity). Controls the cellular uptake by the intestinal epithelium of systemic zinc, which is in turn required to maintain tight junctions and the intestinal permeability (By similarity). Modifies the activity of zinc-dependent phosphodiesterases, thereby indirectly regulating G protein-coupled receptor signaling pathways important for gluconeogenesis and chondrocyte differentiation (By similarity). Regulates insulin receptor signaling, glucose uptake, glycogen synthesis and gluconeogenesis in hepatocytes through the zinc-dependent intracellular catabolism of insulin (PubMed:27703010). Through zinc cellular uptake also plays a role in the adaptation of cells to endoplasmic reticulum stress (By similarity). Major manganese transporter of the basolateral membrane of intestinal epithelial cells, it plays a central role in manganese systemic homeostasis through intestinal manganese uptake (PubMed:31028174). Also involved in manganese extracellular uptake by cells of the blood-brain barrier (PubMed:31699897). May also play a role in manganese and zinc homeostasis participating in their elimination from the blood through the hepatobiliary excretion (By similarity). Also functions in the extracellular uptake of free iron. May also function intracellularly and mediate the transport from endosomes to cytosol of iron endocytosed by transferrin (PubMed:20682781). Plays a role in innate immunity by regulating the expression of cytokines by activated macrophages (PubMed:23052185).</text>
</comment>
<comment type="catalytic activity">
    <reaction evidence="26">
        <text>Zn(2+)(out) + 2 hydrogencarbonate(out) = Zn(2+)(in) + 2 hydrogencarbonate(in)</text>
        <dbReference type="Rhea" id="RHEA:62252"/>
        <dbReference type="ChEBI" id="CHEBI:17544"/>
        <dbReference type="ChEBI" id="CHEBI:29105"/>
    </reaction>
    <physiologicalReaction direction="left-to-right" evidence="5">
        <dbReference type="Rhea" id="RHEA:62253"/>
    </physiologicalReaction>
</comment>
<comment type="catalytic activity">
    <reaction evidence="29">
        <text>Mn(2+)(out) + 2 hydrogencarbonate(out) = Mn(2+)(in) + 2 hydrogencarbonate(in)</text>
        <dbReference type="Rhea" id="RHEA:62260"/>
        <dbReference type="ChEBI" id="CHEBI:17544"/>
        <dbReference type="ChEBI" id="CHEBI:29035"/>
    </reaction>
    <physiologicalReaction direction="left-to-right" evidence="16">
        <dbReference type="Rhea" id="RHEA:62261"/>
    </physiologicalReaction>
</comment>
<comment type="catalytic activity">
    <reaction evidence="1">
        <text>Fe(2+)(out) + 2 hydrogencarbonate(out) = Fe(2+)(in) + 2 hydrogencarbonate(in)</text>
        <dbReference type="Rhea" id="RHEA:62368"/>
        <dbReference type="ChEBI" id="CHEBI:17544"/>
        <dbReference type="ChEBI" id="CHEBI:29033"/>
    </reaction>
    <physiologicalReaction direction="left-to-right" evidence="1">
        <dbReference type="Rhea" id="RHEA:62369"/>
    </physiologicalReaction>
</comment>
<comment type="catalytic activity">
    <reaction evidence="1">
        <text>Cd(2+)(out) + 2 hydrogencarbonate(out) = Cd(2+)(in) + 2 hydrogencarbonate(in)</text>
        <dbReference type="Rhea" id="RHEA:62256"/>
        <dbReference type="ChEBI" id="CHEBI:17544"/>
        <dbReference type="ChEBI" id="CHEBI:48775"/>
    </reaction>
    <physiologicalReaction direction="left-to-right" evidence="1">
        <dbReference type="Rhea" id="RHEA:62257"/>
    </physiologicalReaction>
</comment>
<comment type="subunit">
    <text evidence="3">Homotrimer.</text>
</comment>
<comment type="interaction">
    <interactant intactId="EBI-12176399">
        <id>Q15043-2</id>
    </interactant>
    <interactant intactId="EBI-741037">
        <id>Q9BRK4</id>
        <label>LZTS2</label>
    </interactant>
    <organismsDiffer>false</organismsDiffer>
    <experiments>3</experiments>
</comment>
<comment type="interaction">
    <interactant intactId="EBI-12176399">
        <id>Q15043-2</id>
    </interactant>
    <interactant intactId="EBI-727037">
        <id>Q9UH03</id>
        <label>SEPTIN3</label>
    </interactant>
    <organismsDiffer>false</organismsDiffer>
    <experiments>3</experiments>
</comment>
<comment type="subcellular location">
    <subcellularLocation>
        <location evidence="5 11 12 14">Cell membrane</location>
        <topology evidence="2">Multi-pass membrane protein</topology>
    </subcellularLocation>
    <subcellularLocation>
        <location evidence="16">Apical cell membrane</location>
        <topology evidence="2">Multi-pass membrane protein</topology>
    </subcellularLocation>
    <subcellularLocation>
        <location evidence="15 16">Basolateral cell membrane</location>
        <topology evidence="2">Multi-pass membrane protein</topology>
    </subcellularLocation>
    <subcellularLocation>
        <location evidence="8 12">Early endosome membrane</location>
        <topology evidence="2">Multi-pass membrane protein</topology>
    </subcellularLocation>
    <subcellularLocation>
        <location evidence="12">Late endosome membrane</location>
        <topology evidence="2">Multi-pass membrane protein</topology>
    </subcellularLocation>
    <subcellularLocation>
        <location evidence="8">Lysosome membrane</location>
        <topology evidence="2">Multi-pass membrane protein</topology>
    </subcellularLocation>
    <text evidence="12 15 16">Localized and functional at both apical and basolateral membranes of microvascular capillary endothelial cells that constitute the blood-brain barrier (PubMed:31699897). Localized at the basolateral membrane of enterocytes (PubMed:31028174). Enriched at the plasma membrane upon glucose uptake (PubMed:27703010).</text>
</comment>
<comment type="alternative products">
    <event type="alternative splicing"/>
    <isoform>
        <id>Q15043-1</id>
        <name evidence="23">1</name>
        <name evidence="22">ZIP14B</name>
        <sequence type="displayed"/>
    </isoform>
    <isoform>
        <id>Q15043-2</id>
        <name>3</name>
        <sequence type="described" ref="VSP_029728"/>
    </isoform>
    <isoform>
        <id>Q15043-3</id>
        <name evidence="23">2</name>
        <name evidence="22">ZIP14A</name>
        <sequence type="described" ref="VSP_040139"/>
    </isoform>
</comment>
<comment type="tissue specificity">
    <text evidence="5 8 9 16 17">Ubiquitously expressed, with higher expression in liver, pancreas, fetal liver, thyroid gland, left and right ventricle, right atrium and fetal heart (PubMed:15642354, PubMed:20682781, PubMed:7584044). Weakly expressed in spleen, thymus, and peripheral blood leukocytes (PubMed:7584044). Expressed in liver and in brain by large neurons in the globus pallidus, the insular cortex and the dentate nucleus and to a lower extent in the putamen and the caudate nucleus (at protein level) (PubMed:27231142). Expressed in osteoblasts and giant osteoclast-like cells, but not in osteocytes found osteoblastoma and giant cell tumors (at protein level) (PubMed:29621230). Expressed by microvascular capillary endothelial cells that constitute the blood-brain barrier (at protein level) (PubMed:31699897). Expressed by macrophages (PubMed:23052185).</text>
</comment>
<comment type="tissue specificity">
    <molecule>Isoform 2</molecule>
    <text evidence="11">Widely expressed but not detected in brain, heart, skeletal muscle, placenta and fetal skin.</text>
</comment>
<comment type="induction">
    <text evidence="9 10 13">Up-regulated by iron (at protein level) (PubMed:24927598). Down-regulation upon iron depletion occurs through proteasomal degradation of the intracellular pool (PubMed:24927598). Up-regulated by tunicamycin, a drug inducing endoplasmic reticulum stress (at protein level) (PubMed:28673968). Up-regulated by lipopolysaccharide/LPS (PubMed:23052185).</text>
</comment>
<comment type="PTM">
    <text evidence="10">Ubiquitinated. Ubiquitination occurs upon iron depletion. The ubiquitinated form undergoes proteasomal degradation.</text>
</comment>
<comment type="PTM">
    <text evidence="10">N-glycosylated. N-glycosylation at Asn-102 is required for iron-regulated extraction of the transporter from membranes and subsequent proteasomal degradation.</text>
</comment>
<comment type="disease" evidence="11">
    <disease id="DI-04753">
        <name>Hypermanganesemia with dystonia 2</name>
        <acronym>HMNDYT2</acronym>
        <description>A metabolic autosomal recessive disorder characterized by increased blood manganese levels, neurodegeneration, and rapidly progressive parkinsonism and dystonia. Affected individuals present with loss of developmental milestones, progressive dystonia and bulbar dysfunction in infancy or early childhood. Towards the end of the first decade, they manifest severe generalized pharmacoresistant dystonia, spasticity, limb contractures and scoliosis, and loss of independent ambulation. Cognition may be impaired, but is better preserved than motor function.</description>
        <dbReference type="MIM" id="617013"/>
    </disease>
    <text>The disease is caused by variants affecting the gene represented in this entry.</text>
</comment>
<comment type="disease" evidence="14">
    <disease id="DI-05257">
        <name>Hyperostosis cranialis interna</name>
        <acronym>HCIN</acronym>
        <description>An autosomal dominant bone disorder characterized by endosteal hyperostosis and osteosclerosis of the calvaria and the skull base. The progressive bone overgrowth causes entrapment and dysfunction of cranial nerves I, II, V, VII, and VIII, its first symptoms often presenting during the second decade of life.</description>
        <dbReference type="MIM" id="144755"/>
    </disease>
    <text evidence="14">The disease is caused by variants affecting the gene represented in this entry. Conditional knockin mice overexpressing Arg-438 variant, which is the mouse equivalent of human variant Leu-441, in osteoblasts have a severe skeletal phenotype marked by a drastic increase in cortical thickness due to an enhanced endosteal bone formation, resembling the underlying pathology in HCI patients.</text>
</comment>
<comment type="similarity">
    <text evidence="24">Belongs to the ZIP transporter (TC 2.A.5) family.</text>
</comment>
<comment type="sequence caution" evidence="24">
    <conflict type="erroneous initiation">
        <sequence resource="EMBL-CDS" id="BAA06685"/>
    </conflict>
    <text>Extended N-terminus.</text>
</comment>